<protein>
    <recommendedName>
        <fullName evidence="4">Inactive ubiquitin-specific protease 5</fullName>
        <shortName evidence="4">OsUBP5</shortName>
    </recommendedName>
    <alternativeName>
        <fullName evidence="4">Protein FLOWER AND LEAF COLOR ABERRANT</fullName>
    </alternativeName>
</protein>
<sequence>MEMEMEMVVAVPSPEVPAEEERALIRDITVAAEAHAKEGDTFFLITHRWWQSWIDYVIQDLANSTNNGSHHHEHGSNVLRRPGAIDNTDLIDDTASEVSNMEIELHDTLVEGRDYILLPQQVWEKLHGWYGGGPTLPRKAINTGLSQTDLAIEVYPLRLQLLLAPKGEQAVIRISKKDTVGELHKKACEVFDLIPDEVCIWDYYGRTRHSLMDNLEKTLDDANIQMDQDILVEVTTDANGSLDGGCIGSIQENEYLERESTSLIADASKSGLSNENFASNNYTSRSYSSSLTQSQYLRSSNGDLDNMHGTSAMITRGSPLGLTGLLNLGNTCFMNSAIQCLVHTPEFARYFREDYHREINWQNPLGMVVSTLSTSMALKPYV</sequence>
<accession>Q2R4I5</accession>
<accession>Q0ISR9</accession>
<comment type="function">
    <text evidence="3">Plays an important role in the development of floral organs and chloroplasts (PubMed:30603810). Does not possess deubiquitinating enzyme activity in vitro (PubMed:30603810).</text>
</comment>
<comment type="subcellular location">
    <subcellularLocation>
        <location evidence="3">Cell membrane</location>
    </subcellularLocation>
</comment>
<comment type="tissue specificity">
    <text evidence="3">Widely expressed with the highest expression in floral organs.</text>
</comment>
<comment type="disruption phenotype">
    <text evidence="3">Abnormal floral organ and pollen development, and leaf bleaching.</text>
</comment>
<comment type="similarity">
    <text evidence="5">Belongs to the peptidase C19 family.</text>
</comment>
<comment type="caution">
    <text evidence="3">Lacks the conserved Cys and His active sites that are essential for the activity of deubiquitinating enzymes. Lacks ubiquitin terminal hydrolase activity.</text>
</comment>
<reference key="1">
    <citation type="journal article" date="2005" name="BMC Biol.">
        <title>The sequence of rice chromosomes 11 and 12, rich in disease resistance genes and recent gene duplications.</title>
        <authorList>
            <consortium name="The rice chromosomes 11 and 12 sequencing consortia"/>
        </authorList>
    </citation>
    <scope>NUCLEOTIDE SEQUENCE [LARGE SCALE GENOMIC DNA]</scope>
    <source>
        <strain>cv. Nipponbare</strain>
    </source>
</reference>
<reference key="2">
    <citation type="journal article" date="2005" name="Nature">
        <title>The map-based sequence of the rice genome.</title>
        <authorList>
            <consortium name="International rice genome sequencing project (IRGSP)"/>
        </authorList>
    </citation>
    <scope>NUCLEOTIDE SEQUENCE [LARGE SCALE GENOMIC DNA]</scope>
    <source>
        <strain>cv. Nipponbare</strain>
    </source>
</reference>
<reference key="3">
    <citation type="journal article" date="2008" name="Nucleic Acids Res.">
        <title>The rice annotation project database (RAP-DB): 2008 update.</title>
        <authorList>
            <consortium name="The rice annotation project (RAP)"/>
        </authorList>
    </citation>
    <scope>GENOME REANNOTATION</scope>
    <source>
        <strain>cv. Nipponbare</strain>
    </source>
</reference>
<reference key="4">
    <citation type="journal article" date="2013" name="Rice">
        <title>Improvement of the Oryza sativa Nipponbare reference genome using next generation sequence and optical map data.</title>
        <authorList>
            <person name="Kawahara Y."/>
            <person name="de la Bastide M."/>
            <person name="Hamilton J.P."/>
            <person name="Kanamori H."/>
            <person name="McCombie W.R."/>
            <person name="Ouyang S."/>
            <person name="Schwartz D.C."/>
            <person name="Tanaka T."/>
            <person name="Wu J."/>
            <person name="Zhou S."/>
            <person name="Childs K.L."/>
            <person name="Davidson R.M."/>
            <person name="Lin H."/>
            <person name="Quesada-Ocampo L."/>
            <person name="Vaillancourt B."/>
            <person name="Sakai H."/>
            <person name="Lee S.S."/>
            <person name="Kim J."/>
            <person name="Numa H."/>
            <person name="Itoh T."/>
            <person name="Buell C.R."/>
            <person name="Matsumoto T."/>
        </authorList>
    </citation>
    <scope>GENOME REANNOTATION</scope>
    <source>
        <strain>cv. Nipponbare</strain>
    </source>
</reference>
<reference key="5">
    <citation type="journal article" date="2018" name="Front. Plant Sci.">
        <title>Characterization of the ubiquitin C-terminal hydrolase and ubiquitin-specific protease families in rice (Oryza sativa).</title>
        <authorList>
            <person name="Wang D.H."/>
            <person name="Song W."/>
            <person name="Wei S.W."/>
            <person name="Zheng Y.F."/>
            <person name="Chen Z.S."/>
            <person name="Han J.D."/>
            <person name="Zhang H.T."/>
            <person name="Luo J.C."/>
            <person name="Qin Y.M."/>
            <person name="Xu Z.H."/>
            <person name="Bai S.N."/>
        </authorList>
    </citation>
    <scope>GENE FAMILY</scope>
</reference>
<reference key="6">
    <citation type="journal article" date="2019" name="Plant Cell Rep.">
        <title>FLA, which encodes a homolog of UBP, is required for chlorophyll accumulation and development of lemma and palea in rice.</title>
        <authorList>
            <person name="Ma X."/>
            <person name="Zhang J."/>
            <person name="Han B."/>
            <person name="Tang J."/>
            <person name="Cui D."/>
            <person name="Han L."/>
        </authorList>
    </citation>
    <scope>FUNCTION</scope>
    <scope>SUBCELLULAR LOCATION</scope>
    <scope>TISSUE SPECIFICITY</scope>
    <scope>DISRUPTION PHENOTYPE</scope>
</reference>
<keyword id="KW-1003">Cell membrane</keyword>
<keyword id="KW-0472">Membrane</keyword>
<keyword id="KW-1185">Reference proteome</keyword>
<gene>
    <name evidence="4" type="primary">UBP5</name>
    <name evidence="4" type="synonym">FLA</name>
    <name evidence="7" type="ordered locus">Os11g0473200</name>
    <name evidence="6" type="ordered locus">LOC_Os11g28360</name>
    <name evidence="7" type="ORF">OSNPB_110473200</name>
</gene>
<organism>
    <name type="scientific">Oryza sativa subsp. japonica</name>
    <name type="common">Rice</name>
    <dbReference type="NCBI Taxonomy" id="39947"/>
    <lineage>
        <taxon>Eukaryota</taxon>
        <taxon>Viridiplantae</taxon>
        <taxon>Streptophyta</taxon>
        <taxon>Embryophyta</taxon>
        <taxon>Tracheophyta</taxon>
        <taxon>Spermatophyta</taxon>
        <taxon>Magnoliopsida</taxon>
        <taxon>Liliopsida</taxon>
        <taxon>Poales</taxon>
        <taxon>Poaceae</taxon>
        <taxon>BOP clade</taxon>
        <taxon>Oryzoideae</taxon>
        <taxon>Oryzeae</taxon>
        <taxon>Oryzinae</taxon>
        <taxon>Oryza</taxon>
        <taxon>Oryza sativa</taxon>
    </lineage>
</organism>
<evidence type="ECO:0000255" key="1">
    <source>
        <dbReference type="PROSITE-ProRule" id="PRU00613"/>
    </source>
</evidence>
<evidence type="ECO:0000255" key="2">
    <source>
        <dbReference type="PROSITE-ProRule" id="PRU01035"/>
    </source>
</evidence>
<evidence type="ECO:0000269" key="3">
    <source>
    </source>
</evidence>
<evidence type="ECO:0000303" key="4">
    <source>
    </source>
</evidence>
<evidence type="ECO:0000305" key="5"/>
<evidence type="ECO:0000312" key="6">
    <source>
        <dbReference type="EMBL" id="ABA93659.2"/>
    </source>
</evidence>
<evidence type="ECO:0000312" key="7">
    <source>
        <dbReference type="EMBL" id="BAT13996.1"/>
    </source>
</evidence>
<name>FLA_ORYSJ</name>
<proteinExistence type="evidence at transcript level"/>
<dbReference type="EMBL" id="DP000010">
    <property type="protein sequence ID" value="ABA93659.2"/>
    <property type="molecule type" value="Genomic_DNA"/>
</dbReference>
<dbReference type="EMBL" id="AP008217">
    <property type="protein sequence ID" value="BAF28246.1"/>
    <property type="molecule type" value="Genomic_DNA"/>
</dbReference>
<dbReference type="EMBL" id="AP014967">
    <property type="protein sequence ID" value="BAT13996.1"/>
    <property type="molecule type" value="Genomic_DNA"/>
</dbReference>
<dbReference type="SMR" id="Q2R4I5"/>
<dbReference type="STRING" id="39947.Q2R4I5"/>
<dbReference type="MEROPS" id="C19.093"/>
<dbReference type="PaxDb" id="39947-Q2R4I5"/>
<dbReference type="EnsemblPlants" id="Os11t0473200-01">
    <property type="protein sequence ID" value="Os11t0473200-01"/>
    <property type="gene ID" value="Os11g0473200"/>
</dbReference>
<dbReference type="Gramene" id="Os11t0473200-01">
    <property type="protein sequence ID" value="Os11t0473200-01"/>
    <property type="gene ID" value="Os11g0473200"/>
</dbReference>
<dbReference type="KEGG" id="dosa:Os11g0473200"/>
<dbReference type="eggNOG" id="KOG1870">
    <property type="taxonomic scope" value="Eukaryota"/>
</dbReference>
<dbReference type="HOGENOM" id="CLU_724410_0_0_1"/>
<dbReference type="InParanoid" id="Q2R4I5"/>
<dbReference type="OMA" id="YMIISES"/>
<dbReference type="Proteomes" id="UP000000763">
    <property type="component" value="Chromosome 11"/>
</dbReference>
<dbReference type="Proteomes" id="UP000059680">
    <property type="component" value="Chromosome 11"/>
</dbReference>
<dbReference type="GO" id="GO:0005886">
    <property type="term" value="C:plasma membrane"/>
    <property type="evidence" value="ECO:0007669"/>
    <property type="project" value="UniProtKB-SubCell"/>
</dbReference>
<dbReference type="GO" id="GO:0004843">
    <property type="term" value="F:cysteine-type deubiquitinase activity"/>
    <property type="evidence" value="ECO:0007669"/>
    <property type="project" value="UniProtKB-EC"/>
</dbReference>
<dbReference type="GO" id="GO:0016579">
    <property type="term" value="P:protein deubiquitination"/>
    <property type="evidence" value="ECO:0007669"/>
    <property type="project" value="InterPro"/>
</dbReference>
<dbReference type="Gene3D" id="3.90.70.10">
    <property type="entry name" value="Cysteine proteinases"/>
    <property type="match status" value="1"/>
</dbReference>
<dbReference type="Gene3D" id="3.30.2230.10">
    <property type="entry name" value="DUSP-like"/>
    <property type="match status" value="1"/>
</dbReference>
<dbReference type="Gene3D" id="3.10.20.90">
    <property type="entry name" value="Phosphatidylinositol 3-kinase Catalytic Subunit, Chain A, domain 1"/>
    <property type="match status" value="1"/>
</dbReference>
<dbReference type="InterPro" id="IPR035927">
    <property type="entry name" value="DUSP-like_sf"/>
</dbReference>
<dbReference type="InterPro" id="IPR038765">
    <property type="entry name" value="Papain-like_cys_pep_sf"/>
</dbReference>
<dbReference type="InterPro" id="IPR006615">
    <property type="entry name" value="Pept_C19_DUSP"/>
</dbReference>
<dbReference type="InterPro" id="IPR001394">
    <property type="entry name" value="Peptidase_C19_UCH"/>
</dbReference>
<dbReference type="InterPro" id="IPR050185">
    <property type="entry name" value="Ub_carboxyl-term_hydrolase"/>
</dbReference>
<dbReference type="InterPro" id="IPR018200">
    <property type="entry name" value="USP_CS"/>
</dbReference>
<dbReference type="InterPro" id="IPR028889">
    <property type="entry name" value="USP_dom"/>
</dbReference>
<dbReference type="PANTHER" id="PTHR21646">
    <property type="entry name" value="UBIQUITIN CARBOXYL-TERMINAL HYDROLASE"/>
    <property type="match status" value="1"/>
</dbReference>
<dbReference type="PANTHER" id="PTHR21646:SF18">
    <property type="entry name" value="UBIQUITIN CARBOXYL-TERMINAL HYDROLASE 5"/>
    <property type="match status" value="1"/>
</dbReference>
<dbReference type="Pfam" id="PF06337">
    <property type="entry name" value="DUSP"/>
    <property type="match status" value="1"/>
</dbReference>
<dbReference type="Pfam" id="PF25242">
    <property type="entry name" value="Ubiquitin_UBP8"/>
    <property type="match status" value="1"/>
</dbReference>
<dbReference type="Pfam" id="PF00443">
    <property type="entry name" value="UCH"/>
    <property type="match status" value="1"/>
</dbReference>
<dbReference type="SMART" id="SM00695">
    <property type="entry name" value="DUSP"/>
    <property type="match status" value="1"/>
</dbReference>
<dbReference type="SUPFAM" id="SSF54001">
    <property type="entry name" value="Cysteine proteinases"/>
    <property type="match status" value="1"/>
</dbReference>
<dbReference type="SUPFAM" id="SSF143791">
    <property type="entry name" value="DUSP-like"/>
    <property type="match status" value="1"/>
</dbReference>
<dbReference type="PROSITE" id="PS51283">
    <property type="entry name" value="DUSP"/>
    <property type="match status" value="1"/>
</dbReference>
<dbReference type="PROSITE" id="PS00972">
    <property type="entry name" value="USP_1"/>
    <property type="match status" value="1"/>
</dbReference>
<dbReference type="PROSITE" id="PS50235">
    <property type="entry name" value="USP_3"/>
    <property type="match status" value="1"/>
</dbReference>
<feature type="chain" id="PRO_0000454381" description="Inactive ubiquitin-specific protease 5">
    <location>
        <begin position="1"/>
        <end position="382"/>
    </location>
</feature>
<feature type="domain" description="DUSP" evidence="1">
    <location>
        <begin position="16"/>
        <end position="141"/>
    </location>
</feature>
<feature type="domain" description="USP" evidence="2">
    <location>
        <begin position="323"/>
        <end position="382"/>
    </location>
</feature>